<reference key="1">
    <citation type="journal article" date="2007" name="Science">
        <title>Legumes symbioses: absence of nod genes in photosynthetic bradyrhizobia.</title>
        <authorList>
            <person name="Giraud E."/>
            <person name="Moulin L."/>
            <person name="Vallenet D."/>
            <person name="Barbe V."/>
            <person name="Cytryn E."/>
            <person name="Avarre J.-C."/>
            <person name="Jaubert M."/>
            <person name="Simon D."/>
            <person name="Cartieaux F."/>
            <person name="Prin Y."/>
            <person name="Bena G."/>
            <person name="Hannibal L."/>
            <person name="Fardoux J."/>
            <person name="Kojadinovic M."/>
            <person name="Vuillet L."/>
            <person name="Lajus A."/>
            <person name="Cruveiller S."/>
            <person name="Rouy Z."/>
            <person name="Mangenot S."/>
            <person name="Segurens B."/>
            <person name="Dossat C."/>
            <person name="Franck W.L."/>
            <person name="Chang W.-S."/>
            <person name="Saunders E."/>
            <person name="Bruce D."/>
            <person name="Richardson P."/>
            <person name="Normand P."/>
            <person name="Dreyfus B."/>
            <person name="Pignol D."/>
            <person name="Stacey G."/>
            <person name="Emerich D."/>
            <person name="Vermeglio A."/>
            <person name="Medigue C."/>
            <person name="Sadowsky M."/>
        </authorList>
    </citation>
    <scope>NUCLEOTIDE SEQUENCE [LARGE SCALE GENOMIC DNA]</scope>
    <source>
        <strain>BTAi1 / ATCC BAA-1182</strain>
    </source>
</reference>
<gene>
    <name evidence="1" type="primary">aroC</name>
    <name type="ordered locus">BBta_2470</name>
</gene>
<protein>
    <recommendedName>
        <fullName evidence="1">Chorismate synthase</fullName>
        <shortName evidence="1">CS</shortName>
        <ecNumber evidence="1">4.2.3.5</ecNumber>
    </recommendedName>
    <alternativeName>
        <fullName evidence="1">5-enolpyruvylshikimate-3-phosphate phospholyase</fullName>
    </alternativeName>
</protein>
<accession>A5EEP1</accession>
<comment type="function">
    <text evidence="1">Catalyzes the anti-1,4-elimination of the C-3 phosphate and the C-6 proR hydrogen from 5-enolpyruvylshikimate-3-phosphate (EPSP) to yield chorismate, which is the branch point compound that serves as the starting substrate for the three terminal pathways of aromatic amino acid biosynthesis. This reaction introduces a second double bond into the aromatic ring system.</text>
</comment>
<comment type="catalytic activity">
    <reaction evidence="1">
        <text>5-O-(1-carboxyvinyl)-3-phosphoshikimate = chorismate + phosphate</text>
        <dbReference type="Rhea" id="RHEA:21020"/>
        <dbReference type="ChEBI" id="CHEBI:29748"/>
        <dbReference type="ChEBI" id="CHEBI:43474"/>
        <dbReference type="ChEBI" id="CHEBI:57701"/>
        <dbReference type="EC" id="4.2.3.5"/>
    </reaction>
</comment>
<comment type="cofactor">
    <cofactor evidence="1">
        <name>FMNH2</name>
        <dbReference type="ChEBI" id="CHEBI:57618"/>
    </cofactor>
    <text evidence="1">Reduced FMN (FMNH(2)).</text>
</comment>
<comment type="pathway">
    <text evidence="1">Metabolic intermediate biosynthesis; chorismate biosynthesis; chorismate from D-erythrose 4-phosphate and phosphoenolpyruvate: step 7/7.</text>
</comment>
<comment type="subunit">
    <text evidence="1">Homotetramer.</text>
</comment>
<comment type="similarity">
    <text evidence="1">Belongs to the chorismate synthase family.</text>
</comment>
<keyword id="KW-0028">Amino-acid biosynthesis</keyword>
<keyword id="KW-0057">Aromatic amino acid biosynthesis</keyword>
<keyword id="KW-0274">FAD</keyword>
<keyword id="KW-0285">Flavoprotein</keyword>
<keyword id="KW-0288">FMN</keyword>
<keyword id="KW-0456">Lyase</keyword>
<keyword id="KW-0521">NADP</keyword>
<keyword id="KW-1185">Reference proteome</keyword>
<organism>
    <name type="scientific">Bradyrhizobium sp. (strain BTAi1 / ATCC BAA-1182)</name>
    <dbReference type="NCBI Taxonomy" id="288000"/>
    <lineage>
        <taxon>Bacteria</taxon>
        <taxon>Pseudomonadati</taxon>
        <taxon>Pseudomonadota</taxon>
        <taxon>Alphaproteobacteria</taxon>
        <taxon>Hyphomicrobiales</taxon>
        <taxon>Nitrobacteraceae</taxon>
        <taxon>Bradyrhizobium</taxon>
    </lineage>
</organism>
<evidence type="ECO:0000255" key="1">
    <source>
        <dbReference type="HAMAP-Rule" id="MF_00300"/>
    </source>
</evidence>
<sequence length="361" mass="38700">MSFNTFGHMFRVTTFGESHGVAIGCVVDGCPPRIPLEPAEIQVDLDRRRPGQSRFTTQRQEPDQVKILSGVMPDPDTGAQVTTGTPIALLIENTDQRSKDYSEIKDKFRPGHADFTYEAKYGLRDYRGGGRSSARETATRVAAGAIARKILAGVKVRGALVQMGPHKIDRAKWDWDEIARNPFFCPDKDKAAFFEDYLDGIRKSGSSIGAVLEITAEGVPAGLGAPLYGKLDADLAAAMMSINAVKGVEIGAGFAAAELTGEENADEMRSANDGTRFLSNNAGGILGGIATGQPIVVRFAVKPTSSILTPRQTVDRAGHETEILTKGRHDPCVGIRAVPVGEAMMACVLADHLLRHRGQVG</sequence>
<dbReference type="EC" id="4.2.3.5" evidence="1"/>
<dbReference type="EMBL" id="CP000494">
    <property type="protein sequence ID" value="ABQ34635.1"/>
    <property type="molecule type" value="Genomic_DNA"/>
</dbReference>
<dbReference type="RefSeq" id="WP_012042663.1">
    <property type="nucleotide sequence ID" value="NC_009485.1"/>
</dbReference>
<dbReference type="SMR" id="A5EEP1"/>
<dbReference type="STRING" id="288000.BBta_2470"/>
<dbReference type="KEGG" id="bbt:BBta_2470"/>
<dbReference type="eggNOG" id="COG0082">
    <property type="taxonomic scope" value="Bacteria"/>
</dbReference>
<dbReference type="HOGENOM" id="CLU_034547_0_0_5"/>
<dbReference type="OrthoDB" id="9771806at2"/>
<dbReference type="UniPathway" id="UPA00053">
    <property type="reaction ID" value="UER00090"/>
</dbReference>
<dbReference type="Proteomes" id="UP000000246">
    <property type="component" value="Chromosome"/>
</dbReference>
<dbReference type="GO" id="GO:0005829">
    <property type="term" value="C:cytosol"/>
    <property type="evidence" value="ECO:0007669"/>
    <property type="project" value="TreeGrafter"/>
</dbReference>
<dbReference type="GO" id="GO:0004107">
    <property type="term" value="F:chorismate synthase activity"/>
    <property type="evidence" value="ECO:0007669"/>
    <property type="project" value="UniProtKB-UniRule"/>
</dbReference>
<dbReference type="GO" id="GO:0010181">
    <property type="term" value="F:FMN binding"/>
    <property type="evidence" value="ECO:0007669"/>
    <property type="project" value="TreeGrafter"/>
</dbReference>
<dbReference type="GO" id="GO:0008652">
    <property type="term" value="P:amino acid biosynthetic process"/>
    <property type="evidence" value="ECO:0007669"/>
    <property type="project" value="UniProtKB-KW"/>
</dbReference>
<dbReference type="GO" id="GO:0009073">
    <property type="term" value="P:aromatic amino acid family biosynthetic process"/>
    <property type="evidence" value="ECO:0007669"/>
    <property type="project" value="UniProtKB-KW"/>
</dbReference>
<dbReference type="GO" id="GO:0009423">
    <property type="term" value="P:chorismate biosynthetic process"/>
    <property type="evidence" value="ECO:0007669"/>
    <property type="project" value="UniProtKB-UniRule"/>
</dbReference>
<dbReference type="CDD" id="cd07304">
    <property type="entry name" value="Chorismate_synthase"/>
    <property type="match status" value="1"/>
</dbReference>
<dbReference type="Gene3D" id="3.60.150.10">
    <property type="entry name" value="Chorismate synthase AroC"/>
    <property type="match status" value="1"/>
</dbReference>
<dbReference type="HAMAP" id="MF_00300">
    <property type="entry name" value="Chorismate_synth"/>
    <property type="match status" value="1"/>
</dbReference>
<dbReference type="InterPro" id="IPR000453">
    <property type="entry name" value="Chorismate_synth"/>
</dbReference>
<dbReference type="InterPro" id="IPR035904">
    <property type="entry name" value="Chorismate_synth_AroC_sf"/>
</dbReference>
<dbReference type="InterPro" id="IPR020541">
    <property type="entry name" value="Chorismate_synthase_CS"/>
</dbReference>
<dbReference type="NCBIfam" id="TIGR00033">
    <property type="entry name" value="aroC"/>
    <property type="match status" value="1"/>
</dbReference>
<dbReference type="NCBIfam" id="NF003793">
    <property type="entry name" value="PRK05382.1"/>
    <property type="match status" value="1"/>
</dbReference>
<dbReference type="PANTHER" id="PTHR21085">
    <property type="entry name" value="CHORISMATE SYNTHASE"/>
    <property type="match status" value="1"/>
</dbReference>
<dbReference type="PANTHER" id="PTHR21085:SF0">
    <property type="entry name" value="CHORISMATE SYNTHASE"/>
    <property type="match status" value="1"/>
</dbReference>
<dbReference type="Pfam" id="PF01264">
    <property type="entry name" value="Chorismate_synt"/>
    <property type="match status" value="1"/>
</dbReference>
<dbReference type="PIRSF" id="PIRSF001456">
    <property type="entry name" value="Chorismate_synth"/>
    <property type="match status" value="1"/>
</dbReference>
<dbReference type="SUPFAM" id="SSF103263">
    <property type="entry name" value="Chorismate synthase, AroC"/>
    <property type="match status" value="1"/>
</dbReference>
<dbReference type="PROSITE" id="PS00787">
    <property type="entry name" value="CHORISMATE_SYNTHASE_1"/>
    <property type="match status" value="1"/>
</dbReference>
<dbReference type="PROSITE" id="PS00788">
    <property type="entry name" value="CHORISMATE_SYNTHASE_2"/>
    <property type="match status" value="1"/>
</dbReference>
<dbReference type="PROSITE" id="PS00789">
    <property type="entry name" value="CHORISMATE_SYNTHASE_3"/>
    <property type="match status" value="1"/>
</dbReference>
<feature type="chain" id="PRO_1000022463" description="Chorismate synthase">
    <location>
        <begin position="1"/>
        <end position="361"/>
    </location>
</feature>
<feature type="binding site" evidence="1">
    <location>
        <position position="48"/>
    </location>
    <ligand>
        <name>NADP(+)</name>
        <dbReference type="ChEBI" id="CHEBI:58349"/>
    </ligand>
</feature>
<feature type="binding site" evidence="1">
    <location>
        <position position="54"/>
    </location>
    <ligand>
        <name>NADP(+)</name>
        <dbReference type="ChEBI" id="CHEBI:58349"/>
    </ligand>
</feature>
<feature type="binding site" evidence="1">
    <location>
        <begin position="131"/>
        <end position="133"/>
    </location>
    <ligand>
        <name>FMN</name>
        <dbReference type="ChEBI" id="CHEBI:58210"/>
    </ligand>
</feature>
<feature type="binding site" evidence="1">
    <location>
        <begin position="243"/>
        <end position="244"/>
    </location>
    <ligand>
        <name>FMN</name>
        <dbReference type="ChEBI" id="CHEBI:58210"/>
    </ligand>
</feature>
<feature type="binding site" evidence="1">
    <location>
        <position position="287"/>
    </location>
    <ligand>
        <name>FMN</name>
        <dbReference type="ChEBI" id="CHEBI:58210"/>
    </ligand>
</feature>
<feature type="binding site" evidence="1">
    <location>
        <begin position="302"/>
        <end position="306"/>
    </location>
    <ligand>
        <name>FMN</name>
        <dbReference type="ChEBI" id="CHEBI:58210"/>
    </ligand>
</feature>
<feature type="binding site" evidence="1">
    <location>
        <position position="328"/>
    </location>
    <ligand>
        <name>FMN</name>
        <dbReference type="ChEBI" id="CHEBI:58210"/>
    </ligand>
</feature>
<proteinExistence type="inferred from homology"/>
<name>AROC_BRASB</name>